<protein>
    <recommendedName>
        <fullName>Protein transport protein YIP1</fullName>
    </recommendedName>
    <alternativeName>
        <fullName>YPT-interacting protein 1</fullName>
    </alternativeName>
</protein>
<reference key="1">
    <citation type="journal article" date="1998" name="EMBO J.">
        <title>Specific binding to a novel and essential Golgi membrane protein (Yip1p) functionally links the transport GTPases Ypt1p and Ypt31p.</title>
        <authorList>
            <person name="Yang X."/>
            <person name="Matern H.T."/>
            <person name="Gallwitz D."/>
        </authorList>
    </citation>
    <scope>NUCLEOTIDE SEQUENCE [GENOMIC DNA]</scope>
    <scope>FUNCTION</scope>
    <scope>INTERACTION WITH YPT1 AND YPT31</scope>
    <scope>SUBCELLULAR LOCATION</scope>
    <scope>TOPOLOGY</scope>
    <scope>MUTAGENESIS OF PRO-114; GLY-129 AND GLY-175</scope>
    <source>
        <strain>HLR3</strain>
    </source>
</reference>
<reference key="2">
    <citation type="journal article" date="1997" name="Nature">
        <title>The nucleotide sequence of Saccharomyces cerevisiae chromosome VII.</title>
        <authorList>
            <person name="Tettelin H."/>
            <person name="Agostoni-Carbone M.L."/>
            <person name="Albermann K."/>
            <person name="Albers M."/>
            <person name="Arroyo J."/>
            <person name="Backes U."/>
            <person name="Barreiros T."/>
            <person name="Bertani I."/>
            <person name="Bjourson A.J."/>
            <person name="Brueckner M."/>
            <person name="Bruschi C.V."/>
            <person name="Carignani G."/>
            <person name="Castagnoli L."/>
            <person name="Cerdan E."/>
            <person name="Clemente M.L."/>
            <person name="Coblenz A."/>
            <person name="Coglievina M."/>
            <person name="Coissac E."/>
            <person name="Defoor E."/>
            <person name="Del Bino S."/>
            <person name="Delius H."/>
            <person name="Delneri D."/>
            <person name="de Wergifosse P."/>
            <person name="Dujon B."/>
            <person name="Durand P."/>
            <person name="Entian K.-D."/>
            <person name="Eraso P."/>
            <person name="Escribano V."/>
            <person name="Fabiani L."/>
            <person name="Fartmann B."/>
            <person name="Feroli F."/>
            <person name="Feuermann M."/>
            <person name="Frontali L."/>
            <person name="Garcia-Gonzalez M."/>
            <person name="Garcia-Saez M.I."/>
            <person name="Goffeau A."/>
            <person name="Guerreiro P."/>
            <person name="Hani J."/>
            <person name="Hansen M."/>
            <person name="Hebling U."/>
            <person name="Hernandez K."/>
            <person name="Heumann K."/>
            <person name="Hilger F."/>
            <person name="Hofmann B."/>
            <person name="Indge K.J."/>
            <person name="James C.M."/>
            <person name="Klima R."/>
            <person name="Koetter P."/>
            <person name="Kramer B."/>
            <person name="Kramer W."/>
            <person name="Lauquin G."/>
            <person name="Leuther H."/>
            <person name="Louis E.J."/>
            <person name="Maillier E."/>
            <person name="Marconi A."/>
            <person name="Martegani E."/>
            <person name="Mazon M.J."/>
            <person name="Mazzoni C."/>
            <person name="McReynolds A.D.K."/>
            <person name="Melchioretto P."/>
            <person name="Mewes H.-W."/>
            <person name="Minenkova O."/>
            <person name="Mueller-Auer S."/>
            <person name="Nawrocki A."/>
            <person name="Netter P."/>
            <person name="Neu R."/>
            <person name="Nombela C."/>
            <person name="Oliver S.G."/>
            <person name="Panzeri L."/>
            <person name="Paoluzi S."/>
            <person name="Plevani P."/>
            <person name="Portetelle D."/>
            <person name="Portillo F."/>
            <person name="Potier S."/>
            <person name="Purnelle B."/>
            <person name="Rieger M."/>
            <person name="Riles L."/>
            <person name="Rinaldi T."/>
            <person name="Robben J."/>
            <person name="Rodrigues-Pousada C."/>
            <person name="Rodriguez-Belmonte E."/>
            <person name="Rodriguez-Torres A.M."/>
            <person name="Rose M."/>
            <person name="Ruzzi M."/>
            <person name="Saliola M."/>
            <person name="Sanchez-Perez M."/>
            <person name="Schaefer B."/>
            <person name="Schaefer M."/>
            <person name="Scharfe M."/>
            <person name="Schmidheini T."/>
            <person name="Schreer A."/>
            <person name="Skala J."/>
            <person name="Souciet J.-L."/>
            <person name="Steensma H.Y."/>
            <person name="Talla E."/>
            <person name="Thierry A."/>
            <person name="Vandenbol M."/>
            <person name="van der Aart Q.J.M."/>
            <person name="Van Dyck L."/>
            <person name="Vanoni M."/>
            <person name="Verhasselt P."/>
            <person name="Voet M."/>
            <person name="Volckaert G."/>
            <person name="Wambutt R."/>
            <person name="Watson M.D."/>
            <person name="Weber N."/>
            <person name="Wedler E."/>
            <person name="Wedler H."/>
            <person name="Wipfli P."/>
            <person name="Wolf K."/>
            <person name="Wright L.F."/>
            <person name="Zaccaria P."/>
            <person name="Zimmermann M."/>
            <person name="Zollner A."/>
            <person name="Kleine K."/>
        </authorList>
    </citation>
    <scope>NUCLEOTIDE SEQUENCE [LARGE SCALE GENOMIC DNA]</scope>
    <source>
        <strain>ATCC 204508 / S288c</strain>
    </source>
</reference>
<reference key="3">
    <citation type="journal article" date="2014" name="G3 (Bethesda)">
        <title>The reference genome sequence of Saccharomyces cerevisiae: Then and now.</title>
        <authorList>
            <person name="Engel S.R."/>
            <person name="Dietrich F.S."/>
            <person name="Fisk D.G."/>
            <person name="Binkley G."/>
            <person name="Balakrishnan R."/>
            <person name="Costanzo M.C."/>
            <person name="Dwight S.S."/>
            <person name="Hitz B.C."/>
            <person name="Karra K."/>
            <person name="Nash R.S."/>
            <person name="Weng S."/>
            <person name="Wong E.D."/>
            <person name="Lloyd P."/>
            <person name="Skrzypek M.S."/>
            <person name="Miyasato S.R."/>
            <person name="Simison M."/>
            <person name="Cherry J.M."/>
        </authorList>
    </citation>
    <scope>GENOME REANNOTATION</scope>
    <source>
        <strain>ATCC 204508 / S288c</strain>
    </source>
</reference>
<reference key="4">
    <citation type="journal article" date="2000" name="EMBO J.">
        <title>A novel Golgi membrane protein is part of a GTPase-binding protein complex involved in vesicle targeting.</title>
        <authorList>
            <person name="Matern H.T."/>
            <person name="Yang X."/>
            <person name="Andrulis E."/>
            <person name="Sternglanz R."/>
            <person name="Trepte H.-H."/>
            <person name="Gallwitz D."/>
        </authorList>
    </citation>
    <scope>INTERACTION WITH YIF1</scope>
    <scope>SUBCELLULAR LOCATION</scope>
</reference>
<reference key="5">
    <citation type="journal article" date="2001" name="J. Biol. Chem.">
        <title>Yop1p, the yeast homolog of the polyposis locus protein 1, interacts with Yip1p and negatively regulates cell growth.</title>
        <authorList>
            <person name="Calero M."/>
            <person name="Whittaker G.R."/>
            <person name="Collins R.N."/>
        </authorList>
    </citation>
    <scope>INTERACTION WITH YOP1</scope>
</reference>
<reference key="6">
    <citation type="journal article" date="2002" name="Biochem. Biophys. Res. Commun.">
        <title>Saccharomyces cerevisiae Pra1p/Yip3p interacts with Yip1p and Rab proteins.</title>
        <authorList>
            <person name="Calero M."/>
            <person name="Collins R.N."/>
        </authorList>
    </citation>
    <scope>INTERACTION WITH YIP3</scope>
</reference>
<reference key="7">
    <citation type="journal article" date="2003" name="J. Biol. Chem.">
        <title>The Yip1p.Yif1p complex is required for the fusion competence of endoplasmic reticulum-derived vesicles.</title>
        <authorList>
            <person name="Barrowman J."/>
            <person name="Wang W."/>
            <person name="Zhang Y."/>
            <person name="Ferro-Novick S."/>
        </authorList>
    </citation>
    <scope>FUNCTION</scope>
    <scope>INTERACTION WITH BOS1; SEC22 AND YPT1</scope>
</reference>
<reference key="8">
    <citation type="journal article" date="2003" name="Mol. Biol. Cell">
        <title>Dual prenylation is required for Rab protein localization and function.</title>
        <authorList>
            <person name="Calero M."/>
            <person name="Chen C.Z."/>
            <person name="Zhu W."/>
            <person name="Winand N.J."/>
            <person name="Havas K.A."/>
            <person name="Gilbert P.M."/>
            <person name="Burd C.G."/>
            <person name="Collins R.N."/>
        </authorList>
    </citation>
    <scope>INTERACTION WITH YIP4; YIP5 AND YPT1</scope>
</reference>
<reference key="9">
    <citation type="journal article" date="2004" name="Genetics">
        <title>Genetic analysis of yeast Yip1p function reveals a requirement for Golgi-localized rab proteins and rab-Guanine nucleotide dissociation inhibitor.</title>
        <authorList>
            <person name="Chen C.Z."/>
            <person name="Calero M."/>
            <person name="DeRegis C.J."/>
            <person name="Heidtman M."/>
            <person name="Barlowe C."/>
            <person name="Collins R.N."/>
        </authorList>
    </citation>
    <scope>MUTAGENESIS OF GLU-70; GLU-76; PHE-81; LYS-130; 153-LEU--SER-155; CYS-177 AND PRO-180</scope>
    <scope>INTERACTION WITH YIF1; YPT1 AND YPT31</scope>
</reference>
<reference key="10">
    <citation type="journal article" date="2004" name="Mol. Cell. Proteomics">
        <title>The phox homology (PX) domain protein interaction network in yeast.</title>
        <authorList>
            <person name="Vollert C.S."/>
            <person name="Uetz P."/>
        </authorList>
    </citation>
    <scope>INTERACTION WITH SNX3</scope>
</reference>
<accession>P53039</accession>
<accession>D6VUV6</accession>
<sequence length="248" mass="27080">MSFYNTSNNANNGGGFYQPSAQFAVPQGSMSFQNTVGSSNTGNDNNLGVAPDPLPVGILHALSTKGYPHEPPLLEEIGINFDHIITKTKMVLIPIRFGSGVPQEILNDSDLAGPLIFFLLFGLFLLMAGKVHFGYIYGVALFGTISLHNLSKLMSNNDTSTQTNLQFFNTASILGYCFLPLCFLSLLGIFHGLNNTTGYVVSVLFVIWSTWTSSGFLNSLLQLQNARLLIAYPLLIFYSVFALMVIFV</sequence>
<keyword id="KW-0256">Endoplasmic reticulum</keyword>
<keyword id="KW-0931">ER-Golgi transport</keyword>
<keyword id="KW-0333">Golgi apparatus</keyword>
<keyword id="KW-0472">Membrane</keyword>
<keyword id="KW-0653">Protein transport</keyword>
<keyword id="KW-1185">Reference proteome</keyword>
<keyword id="KW-0812">Transmembrane</keyword>
<keyword id="KW-1133">Transmembrane helix</keyword>
<keyword id="KW-0813">Transport</keyword>
<gene>
    <name type="primary">YIP1</name>
    <name type="ordered locus">YGR172C</name>
</gene>
<proteinExistence type="evidence at protein level"/>
<name>YIP1_YEAST</name>
<evidence type="ECO:0000255" key="1"/>
<evidence type="ECO:0000269" key="2">
    <source>
    </source>
</evidence>
<evidence type="ECO:0000269" key="3">
    <source>
    </source>
</evidence>
<evidence type="ECO:0000269" key="4">
    <source>
    </source>
</evidence>
<evidence type="ECO:0000269" key="5">
    <source>
    </source>
</evidence>
<evidence type="ECO:0000269" key="6">
    <source>
    </source>
</evidence>
<evidence type="ECO:0000269" key="7">
    <source>
    </source>
</evidence>
<evidence type="ECO:0000269" key="8">
    <source>
    </source>
</evidence>
<evidence type="ECO:0000269" key="9">
    <source>
    </source>
</evidence>
<evidence type="ECO:0000305" key="10"/>
<comment type="function">
    <text evidence="5 9">Required for fusion of ER-derived vesicles with the Golgi during ER-to-Golgi protein transport, probably by mediating correct membrane localization of YPT1.</text>
</comment>
<comment type="subunit">
    <text evidence="2 3 4 5 6 7 8 9">Component of the YIP1-YIF1 complex, composed of at least YIF1, YIP1 and YOS1. The complex interacts with the ER to Golgi SNAREs BOS1 and SEC22. Interacts with the prenylated form of the Rab GTPases YPT1 and YPT31. Interacts with the YIP1 family members YIP4 and YIP5. Interacts with SNX3, YIP3 and YOP1.</text>
</comment>
<comment type="interaction">
    <interactant intactId="EBI-25295">
        <id>P53039</id>
    </interactant>
    <interactant intactId="EBI-36894">
        <id>Q07528</id>
        <label>ATG20</label>
    </interactant>
    <organismsDiffer>false</organismsDiffer>
    <experiments>2</experiments>
</comment>
<comment type="interaction">
    <interactant intactId="EBI-25295">
        <id>P53039</id>
    </interactant>
    <interactant intactId="EBI-20366">
        <id>P32913</id>
        <label>VPS17</label>
    </interactant>
    <organismsDiffer>false</organismsDiffer>
    <experiments>2</experiments>
</comment>
<comment type="interaction">
    <interactant intactId="EBI-25295">
        <id>P53039</id>
    </interactant>
    <interactant intactId="EBI-28230">
        <id>P53845</id>
        <label>YIF1</label>
    </interactant>
    <organismsDiffer>false</organismsDiffer>
    <experiments>5</experiments>
</comment>
<comment type="interaction">
    <interactant intactId="EBI-25295">
        <id>P53039</id>
    </interactant>
    <interactant intactId="EBI-24665">
        <id>P38815</id>
        <label>YPT35</label>
    </interactant>
    <organismsDiffer>false</organismsDiffer>
    <experiments>3</experiments>
</comment>
<comment type="subcellular location">
    <subcellularLocation>
        <location>Endoplasmic reticulum membrane</location>
        <topology>Multi-pass membrane protein</topology>
    </subcellularLocation>
    <subcellularLocation>
        <location>Golgi apparatus membrane</location>
        <topology>Multi-pass membrane protein</topology>
    </subcellularLocation>
</comment>
<comment type="similarity">
    <text evidence="10">Belongs to the YIP1 family.</text>
</comment>
<dbReference type="EMBL" id="X97342">
    <property type="protein sequence ID" value="CAA66031.1"/>
    <property type="molecule type" value="Genomic_DNA"/>
</dbReference>
<dbReference type="EMBL" id="Z72957">
    <property type="protein sequence ID" value="CAA97198.1"/>
    <property type="molecule type" value="Genomic_DNA"/>
</dbReference>
<dbReference type="EMBL" id="BK006941">
    <property type="protein sequence ID" value="DAA08267.1"/>
    <property type="molecule type" value="Genomic_DNA"/>
</dbReference>
<dbReference type="PIR" id="S64486">
    <property type="entry name" value="S64486"/>
</dbReference>
<dbReference type="RefSeq" id="NP_011688.3">
    <property type="nucleotide sequence ID" value="NM_001181301.3"/>
</dbReference>
<dbReference type="BioGRID" id="33424">
    <property type="interactions" value="479"/>
</dbReference>
<dbReference type="DIP" id="DIP-2080N"/>
<dbReference type="FunCoup" id="P53039">
    <property type="interactions" value="1146"/>
</dbReference>
<dbReference type="IntAct" id="P53039">
    <property type="interactions" value="23"/>
</dbReference>
<dbReference type="MINT" id="P53039"/>
<dbReference type="STRING" id="4932.YGR172C"/>
<dbReference type="TCDB" id="9.B.135.1.1">
    <property type="family name" value="the membrane trafficking yip (yip) family"/>
</dbReference>
<dbReference type="PaxDb" id="4932-YGR172C"/>
<dbReference type="PeptideAtlas" id="P53039"/>
<dbReference type="DNASU" id="853082"/>
<dbReference type="EnsemblFungi" id="YGR172C_mRNA">
    <property type="protein sequence ID" value="YGR172C"/>
    <property type="gene ID" value="YGR172C"/>
</dbReference>
<dbReference type="GeneID" id="853082"/>
<dbReference type="KEGG" id="sce:YGR172C"/>
<dbReference type="AGR" id="SGD:S000003404"/>
<dbReference type="SGD" id="S000003404">
    <property type="gene designation" value="YIP1"/>
</dbReference>
<dbReference type="VEuPathDB" id="FungiDB:YGR172C"/>
<dbReference type="eggNOG" id="KOG3103">
    <property type="taxonomic scope" value="Eukaryota"/>
</dbReference>
<dbReference type="GeneTree" id="ENSGT00940000153168"/>
<dbReference type="HOGENOM" id="CLU_074741_3_1_1"/>
<dbReference type="InParanoid" id="P53039"/>
<dbReference type="OMA" id="HIRAKSM"/>
<dbReference type="OrthoDB" id="440385at2759"/>
<dbReference type="BioCyc" id="YEAST:G3O-30868-MONOMER"/>
<dbReference type="BioGRID-ORCS" id="853082">
    <property type="hits" value="6 hits in 10 CRISPR screens"/>
</dbReference>
<dbReference type="PRO" id="PR:P53039"/>
<dbReference type="Proteomes" id="UP000002311">
    <property type="component" value="Chromosome VII"/>
</dbReference>
<dbReference type="RNAct" id="P53039">
    <property type="molecule type" value="protein"/>
</dbReference>
<dbReference type="GO" id="GO:0030134">
    <property type="term" value="C:COPII-coated ER to Golgi transport vesicle"/>
    <property type="evidence" value="ECO:0000314"/>
    <property type="project" value="SGD"/>
</dbReference>
<dbReference type="GO" id="GO:0005783">
    <property type="term" value="C:endoplasmic reticulum"/>
    <property type="evidence" value="ECO:0007005"/>
    <property type="project" value="SGD"/>
</dbReference>
<dbReference type="GO" id="GO:0005789">
    <property type="term" value="C:endoplasmic reticulum membrane"/>
    <property type="evidence" value="ECO:0000314"/>
    <property type="project" value="SGD"/>
</dbReference>
<dbReference type="GO" id="GO:0000139">
    <property type="term" value="C:Golgi membrane"/>
    <property type="evidence" value="ECO:0000314"/>
    <property type="project" value="SGD"/>
</dbReference>
<dbReference type="GO" id="GO:0005802">
    <property type="term" value="C:trans-Golgi network"/>
    <property type="evidence" value="ECO:0000318"/>
    <property type="project" value="GO_Central"/>
</dbReference>
<dbReference type="GO" id="GO:0006888">
    <property type="term" value="P:endoplasmic reticulum to Golgi vesicle-mediated transport"/>
    <property type="evidence" value="ECO:0000315"/>
    <property type="project" value="SGD"/>
</dbReference>
<dbReference type="GO" id="GO:0015031">
    <property type="term" value="P:protein transport"/>
    <property type="evidence" value="ECO:0007669"/>
    <property type="project" value="UniProtKB-KW"/>
</dbReference>
<dbReference type="GO" id="GO:0048280">
    <property type="term" value="P:vesicle fusion with Golgi apparatus"/>
    <property type="evidence" value="ECO:0000315"/>
    <property type="project" value="SGD"/>
</dbReference>
<dbReference type="GO" id="GO:0016192">
    <property type="term" value="P:vesicle-mediated transport"/>
    <property type="evidence" value="ECO:0000315"/>
    <property type="project" value="SGD"/>
</dbReference>
<dbReference type="InterPro" id="IPR045231">
    <property type="entry name" value="Yip1/4-like"/>
</dbReference>
<dbReference type="InterPro" id="IPR006977">
    <property type="entry name" value="Yip1_dom"/>
</dbReference>
<dbReference type="PANTHER" id="PTHR21236">
    <property type="entry name" value="GOLGI MEMBRANE PROTEIN YIP1"/>
    <property type="match status" value="1"/>
</dbReference>
<dbReference type="PANTHER" id="PTHR21236:SF2">
    <property type="entry name" value="PROTEIN YIPF"/>
    <property type="match status" value="1"/>
</dbReference>
<dbReference type="Pfam" id="PF04893">
    <property type="entry name" value="Yip1"/>
    <property type="match status" value="1"/>
</dbReference>
<organism>
    <name type="scientific">Saccharomyces cerevisiae (strain ATCC 204508 / S288c)</name>
    <name type="common">Baker's yeast</name>
    <dbReference type="NCBI Taxonomy" id="559292"/>
    <lineage>
        <taxon>Eukaryota</taxon>
        <taxon>Fungi</taxon>
        <taxon>Dikarya</taxon>
        <taxon>Ascomycota</taxon>
        <taxon>Saccharomycotina</taxon>
        <taxon>Saccharomycetes</taxon>
        <taxon>Saccharomycetales</taxon>
        <taxon>Saccharomycetaceae</taxon>
        <taxon>Saccharomyces</taxon>
    </lineage>
</organism>
<feature type="chain" id="PRO_0000066269" description="Protein transport protein YIP1">
    <location>
        <begin position="1"/>
        <end position="248"/>
    </location>
</feature>
<feature type="topological domain" description="Cytoplasmic" evidence="1">
    <location>
        <begin position="1"/>
        <end position="110"/>
    </location>
</feature>
<feature type="transmembrane region" description="Helical" evidence="1">
    <location>
        <begin position="111"/>
        <end position="131"/>
    </location>
</feature>
<feature type="topological domain" description="Lumenal" evidence="1">
    <location>
        <position position="132"/>
    </location>
</feature>
<feature type="transmembrane region" description="Helical" evidence="1">
    <location>
        <begin position="133"/>
        <end position="153"/>
    </location>
</feature>
<feature type="topological domain" description="Cytoplasmic" evidence="1">
    <location>
        <begin position="154"/>
        <end position="172"/>
    </location>
</feature>
<feature type="transmembrane region" description="Helical" evidence="1">
    <location>
        <begin position="173"/>
        <end position="193"/>
    </location>
</feature>
<feature type="topological domain" description="Lumenal" evidence="1">
    <location>
        <begin position="194"/>
        <end position="196"/>
    </location>
</feature>
<feature type="transmembrane region" description="Helical" evidence="1">
    <location>
        <begin position="197"/>
        <end position="217"/>
    </location>
</feature>
<feature type="topological domain" description="Cytoplasmic" evidence="1">
    <location>
        <begin position="218"/>
        <end position="227"/>
    </location>
</feature>
<feature type="transmembrane region" description="Helical" evidence="1">
    <location>
        <begin position="228"/>
        <end position="248"/>
    </location>
</feature>
<feature type="mutagenesis site" description="In YIP1-41; lethal; abolishes binding to YIF1, YPT1 and YPT31. In YIP1-40; temperature sensitive; reduces binding to YPT31, and inhibits ER vesicle budding; when associated with A-130." evidence="8">
    <original>E</original>
    <variation>G</variation>
    <location>
        <position position="70"/>
    </location>
</feature>
<feature type="mutagenesis site" description="In YIP1-4; temperature sensitive; reduces binding to YIF1, YPT1 and YPT31. In YIP1-44; lethal; when associated with E-130." evidence="8">
    <original>E</original>
    <variation>K</variation>
    <location>
        <position position="70"/>
    </location>
</feature>
<feature type="mutagenesis site" description="In YIP1-42; temperature sensitive; abolishes binding to YPT1 and YPT31, and inhibits ER vesicle budding." evidence="8">
    <original>E</original>
    <variation>V</variation>
    <location>
        <position position="70"/>
    </location>
</feature>
<feature type="mutagenesis site" description="In YIP1-6; lethal; reduces binding to YIF1." evidence="8">
    <original>E</original>
    <variation>K</variation>
    <location>
        <position position="76"/>
    </location>
</feature>
<feature type="mutagenesis site" description="In YIP1-9; lethal." evidence="8">
    <original>F</original>
    <variation>Y</variation>
    <location>
        <position position="81"/>
    </location>
</feature>
<feature type="mutagenesis site" description="In YIP1-1; blocks ER-Golgi protein transport, and causes a severe growth defect at 36 degrees Celsius; when associated with E-129." evidence="9">
    <original>P</original>
    <variation>L</variation>
    <location>
        <position position="114"/>
    </location>
</feature>
<feature type="mutagenesis site" description="In YIP1-1; blocks ER-Golgi protein transport, and causes a severe growth defect at 36 degrees Celsius; when associated with L-114." evidence="9">
    <original>G</original>
    <variation>E</variation>
    <location>
        <position position="129"/>
    </location>
</feature>
<feature type="mutagenesis site" description="In YIP1-40; temperature sensitive; reduces binding to YPT31, and inhibits ER vesicle budding; when associated with G-70." evidence="8">
    <original>K</original>
    <variation>A</variation>
    <location>
        <position position="130"/>
    </location>
</feature>
<feature type="mutagenesis site" description="In YIP1-44; lethal; when associated with K-70." evidence="8">
    <original>K</original>
    <variation>E</variation>
    <location>
        <position position="130"/>
    </location>
</feature>
<feature type="mutagenesis site" description="In YIP1-12; abolishes binding to YPT1 and YPT31." evidence="8">
    <original>LMS</original>
    <variation>GGG</variation>
    <location>
        <begin position="153"/>
        <end position="155"/>
    </location>
</feature>
<feature type="mutagenesis site" description="In YIP1-2; abolishes binding to YPT1 and YPT31, reduces binding to YIF1, blocks ER-Golgi protein transport, and causes a severe growth defect at 36 degrees Celsius." evidence="9">
    <original>G</original>
    <variation>E</variation>
    <location>
        <position position="175"/>
    </location>
</feature>
<feature type="mutagenesis site" description="In YIP1-18; abolishes binding to YIF1, YPT1 and YPT31." evidence="8">
    <original>C</original>
    <variation>S</variation>
    <location>
        <position position="177"/>
    </location>
</feature>
<feature type="mutagenesis site" description="In YIP1-19; lethal; abolishes binding to YPT1 and YPT31, and reduces binding to YIF1." evidence="8">
    <original>P</original>
    <variation>G</variation>
    <location>
        <position position="180"/>
    </location>
</feature>